<dbReference type="EC" id="3.4.21.92" evidence="1"/>
<dbReference type="EMBL" id="BX251410">
    <property type="protein sequence ID" value="CAD66958.1"/>
    <property type="molecule type" value="Genomic_DNA"/>
</dbReference>
<dbReference type="RefSeq" id="WP_011096238.1">
    <property type="nucleotide sequence ID" value="NC_004551.1"/>
</dbReference>
<dbReference type="SMR" id="Q83I18"/>
<dbReference type="MEROPS" id="S14.009"/>
<dbReference type="GeneID" id="67388060"/>
<dbReference type="KEGG" id="tws:TW284"/>
<dbReference type="HOGENOM" id="CLU_058707_3_2_11"/>
<dbReference type="GO" id="GO:0005737">
    <property type="term" value="C:cytoplasm"/>
    <property type="evidence" value="ECO:0007669"/>
    <property type="project" value="UniProtKB-SubCell"/>
</dbReference>
<dbReference type="GO" id="GO:0009368">
    <property type="term" value="C:endopeptidase Clp complex"/>
    <property type="evidence" value="ECO:0007669"/>
    <property type="project" value="TreeGrafter"/>
</dbReference>
<dbReference type="GO" id="GO:0004176">
    <property type="term" value="F:ATP-dependent peptidase activity"/>
    <property type="evidence" value="ECO:0007669"/>
    <property type="project" value="InterPro"/>
</dbReference>
<dbReference type="GO" id="GO:0051117">
    <property type="term" value="F:ATPase binding"/>
    <property type="evidence" value="ECO:0007669"/>
    <property type="project" value="TreeGrafter"/>
</dbReference>
<dbReference type="GO" id="GO:0004252">
    <property type="term" value="F:serine-type endopeptidase activity"/>
    <property type="evidence" value="ECO:0007669"/>
    <property type="project" value="UniProtKB-UniRule"/>
</dbReference>
<dbReference type="GO" id="GO:0006515">
    <property type="term" value="P:protein quality control for misfolded or incompletely synthesized proteins"/>
    <property type="evidence" value="ECO:0007669"/>
    <property type="project" value="TreeGrafter"/>
</dbReference>
<dbReference type="CDD" id="cd07017">
    <property type="entry name" value="S14_ClpP_2"/>
    <property type="match status" value="1"/>
</dbReference>
<dbReference type="FunFam" id="3.90.226.10:FF:000002">
    <property type="entry name" value="ATP-dependent Clp protease proteolytic subunit"/>
    <property type="match status" value="1"/>
</dbReference>
<dbReference type="Gene3D" id="3.90.226.10">
    <property type="entry name" value="2-enoyl-CoA Hydratase, Chain A, domain 1"/>
    <property type="match status" value="1"/>
</dbReference>
<dbReference type="HAMAP" id="MF_00444">
    <property type="entry name" value="ClpP"/>
    <property type="match status" value="1"/>
</dbReference>
<dbReference type="InterPro" id="IPR001907">
    <property type="entry name" value="ClpP"/>
</dbReference>
<dbReference type="InterPro" id="IPR029045">
    <property type="entry name" value="ClpP/crotonase-like_dom_sf"/>
</dbReference>
<dbReference type="InterPro" id="IPR023562">
    <property type="entry name" value="ClpP/TepA"/>
</dbReference>
<dbReference type="InterPro" id="IPR033135">
    <property type="entry name" value="ClpP_His_AS"/>
</dbReference>
<dbReference type="InterPro" id="IPR018215">
    <property type="entry name" value="ClpP_Ser_AS"/>
</dbReference>
<dbReference type="NCBIfam" id="NF001368">
    <property type="entry name" value="PRK00277.1"/>
    <property type="match status" value="1"/>
</dbReference>
<dbReference type="NCBIfam" id="NF009205">
    <property type="entry name" value="PRK12553.1"/>
    <property type="match status" value="1"/>
</dbReference>
<dbReference type="PANTHER" id="PTHR10381">
    <property type="entry name" value="ATP-DEPENDENT CLP PROTEASE PROTEOLYTIC SUBUNIT"/>
    <property type="match status" value="1"/>
</dbReference>
<dbReference type="PANTHER" id="PTHR10381:SF26">
    <property type="entry name" value="ATP-DEPENDENT CLP PROTEASE PROTEOLYTIC SUBUNIT-LIKE-RELATED"/>
    <property type="match status" value="1"/>
</dbReference>
<dbReference type="Pfam" id="PF00574">
    <property type="entry name" value="CLP_protease"/>
    <property type="match status" value="1"/>
</dbReference>
<dbReference type="PRINTS" id="PR00127">
    <property type="entry name" value="CLPPROTEASEP"/>
</dbReference>
<dbReference type="SUPFAM" id="SSF52096">
    <property type="entry name" value="ClpP/crotonase"/>
    <property type="match status" value="1"/>
</dbReference>
<dbReference type="PROSITE" id="PS00382">
    <property type="entry name" value="CLP_PROTEASE_HIS"/>
    <property type="match status" value="1"/>
</dbReference>
<dbReference type="PROSITE" id="PS00381">
    <property type="entry name" value="CLP_PROTEASE_SER"/>
    <property type="match status" value="1"/>
</dbReference>
<keyword id="KW-0963">Cytoplasm</keyword>
<keyword id="KW-0378">Hydrolase</keyword>
<keyword id="KW-0645">Protease</keyword>
<keyword id="KW-0720">Serine protease</keyword>
<sequence length="207" mass="22956">MYPNSRYILPSLDERTAYGYKQVDPYTKLFEDRIVFLGVQIDDASADDVMAQLLVLEGQDAERDIIMYINSPGGSFTAMTAIYDTMQYIRPQIQTVCLGQAASAAAVILSAGTPGKRLALPNARILIHQPVVASSGYGQASDIEIQAREIMRMREWLEKTLAQHSNKSVKQVSKDIDRDKILSSEQALEYGLIDQILVSRKAGLGKK</sequence>
<gene>
    <name evidence="1" type="primary">clpP2</name>
    <name type="ordered locus">TW284</name>
</gene>
<accession>Q83I18</accession>
<organism>
    <name type="scientific">Tropheryma whipplei (strain TW08/27)</name>
    <name type="common">Whipple's bacillus</name>
    <dbReference type="NCBI Taxonomy" id="218496"/>
    <lineage>
        <taxon>Bacteria</taxon>
        <taxon>Bacillati</taxon>
        <taxon>Actinomycetota</taxon>
        <taxon>Actinomycetes</taxon>
        <taxon>Micrococcales</taxon>
        <taxon>Tropherymataceae</taxon>
        <taxon>Tropheryma</taxon>
    </lineage>
</organism>
<protein>
    <recommendedName>
        <fullName evidence="1">ATP-dependent Clp protease proteolytic subunit 2</fullName>
        <ecNumber evidence="1">3.4.21.92</ecNumber>
    </recommendedName>
    <alternativeName>
        <fullName evidence="1">Endopeptidase Clp 2</fullName>
    </alternativeName>
</protein>
<comment type="function">
    <text evidence="1">Cleaves peptides in various proteins in a process that requires ATP hydrolysis. Has a chymotrypsin-like activity. Plays a major role in the degradation of misfolded proteins.</text>
</comment>
<comment type="catalytic activity">
    <reaction evidence="1">
        <text>Hydrolysis of proteins to small peptides in the presence of ATP and magnesium. alpha-casein is the usual test substrate. In the absence of ATP, only oligopeptides shorter than five residues are hydrolyzed (such as succinyl-Leu-Tyr-|-NHMec, and Leu-Tyr-Leu-|-Tyr-Trp, in which cleavage of the -Tyr-|-Leu- and -Tyr-|-Trp bonds also occurs).</text>
        <dbReference type="EC" id="3.4.21.92"/>
    </reaction>
</comment>
<comment type="subunit">
    <text evidence="1">Fourteen ClpP subunits assemble into 2 heptameric rings which stack back to back to give a disk-like structure with a central cavity, resembling the structure of eukaryotic proteasomes.</text>
</comment>
<comment type="subcellular location">
    <subcellularLocation>
        <location evidence="1">Cytoplasm</location>
    </subcellularLocation>
</comment>
<comment type="similarity">
    <text evidence="1">Belongs to the peptidase S14 family.</text>
</comment>
<evidence type="ECO:0000255" key="1">
    <source>
        <dbReference type="HAMAP-Rule" id="MF_00444"/>
    </source>
</evidence>
<feature type="chain" id="PRO_0000179707" description="ATP-dependent Clp protease proteolytic subunit 2">
    <location>
        <begin position="1"/>
        <end position="207"/>
    </location>
</feature>
<feature type="active site" description="Nucleophile" evidence="1">
    <location>
        <position position="103"/>
    </location>
</feature>
<feature type="active site" evidence="1">
    <location>
        <position position="128"/>
    </location>
</feature>
<name>CLPP2_TROW8</name>
<proteinExistence type="inferred from homology"/>
<reference key="1">
    <citation type="journal article" date="2003" name="Lancet">
        <title>Sequencing and analysis of the genome of the Whipple's disease bacterium Tropheryma whipplei.</title>
        <authorList>
            <person name="Bentley S.D."/>
            <person name="Maiwald M."/>
            <person name="Murphy L.D."/>
            <person name="Pallen M.J."/>
            <person name="Yeats C.A."/>
            <person name="Dover L.G."/>
            <person name="Norbertczak H.T."/>
            <person name="Besra G.S."/>
            <person name="Quail M.A."/>
            <person name="Harris D.E."/>
            <person name="von Herbay A."/>
            <person name="Goble A."/>
            <person name="Rutter S."/>
            <person name="Squares R."/>
            <person name="Squares S."/>
            <person name="Barrell B.G."/>
            <person name="Parkhill J."/>
            <person name="Relman D.A."/>
        </authorList>
    </citation>
    <scope>NUCLEOTIDE SEQUENCE [LARGE SCALE GENOMIC DNA]</scope>
    <source>
        <strain>TW08/27</strain>
    </source>
</reference>